<organism>
    <name type="scientific">Bos taurus</name>
    <name type="common">Bovine</name>
    <dbReference type="NCBI Taxonomy" id="9913"/>
    <lineage>
        <taxon>Eukaryota</taxon>
        <taxon>Metazoa</taxon>
        <taxon>Chordata</taxon>
        <taxon>Craniata</taxon>
        <taxon>Vertebrata</taxon>
        <taxon>Euteleostomi</taxon>
        <taxon>Mammalia</taxon>
        <taxon>Eutheria</taxon>
        <taxon>Laurasiatheria</taxon>
        <taxon>Artiodactyla</taxon>
        <taxon>Ruminantia</taxon>
        <taxon>Pecora</taxon>
        <taxon>Bovidae</taxon>
        <taxon>Bovinae</taxon>
        <taxon>Bos</taxon>
    </lineage>
</organism>
<sequence length="38" mass="4359">VRNFVTCRINRGFCVPIRCPGHRRQIGTCLGPQIKCCR</sequence>
<reference key="1">
    <citation type="journal article" date="1993" name="J. Biol. Chem.">
        <title>Purification, primary structures, and antibacterial activities of beta-defensins, a new family of antimicrobial peptides from bovine neutrophils.</title>
        <authorList>
            <person name="Selsted M.E."/>
            <person name="Tang Y.-Q."/>
            <person name="Morris W.L."/>
            <person name="McGuire P.A."/>
            <person name="Novotny M.J."/>
            <person name="Smith W."/>
            <person name="Henschen A.H."/>
            <person name="Cullor J.S."/>
        </authorList>
    </citation>
    <scope>PROTEIN SEQUENCE</scope>
    <source>
        <strain>Hereford</strain>
        <tissue>Neutrophil</tissue>
    </source>
</reference>
<accession>P46166</accession>
<proteinExistence type="evidence at protein level"/>
<comment type="function">
    <text>Has bactericidal activity. Active against E.coli ML35 and S.aureus 502A.</text>
</comment>
<comment type="subcellular location">
    <subcellularLocation>
        <location>Secreted</location>
    </subcellularLocation>
</comment>
<comment type="tissue specificity">
    <text>Neutrophilic granules.</text>
</comment>
<comment type="similarity">
    <text evidence="2">Belongs to the beta-defensin family.</text>
</comment>
<gene>
    <name type="primary">DEFB8</name>
</gene>
<feature type="peptide" id="PRO_0000044724" description="Beta-defensin 8">
    <location>
        <begin position="1"/>
        <end position="38"/>
    </location>
</feature>
<feature type="disulfide bond" evidence="1">
    <location>
        <begin position="7"/>
        <end position="36"/>
    </location>
</feature>
<feature type="disulfide bond" evidence="1">
    <location>
        <begin position="14"/>
        <end position="29"/>
    </location>
</feature>
<feature type="disulfide bond" evidence="1">
    <location>
        <begin position="19"/>
        <end position="37"/>
    </location>
</feature>
<evidence type="ECO:0000250" key="1"/>
<evidence type="ECO:0000305" key="2"/>
<dbReference type="PIR" id="I45495">
    <property type="entry name" value="I45495"/>
</dbReference>
<dbReference type="SMR" id="P46166"/>
<dbReference type="FunCoup" id="P46166">
    <property type="interactions" value="22"/>
</dbReference>
<dbReference type="PeptideAtlas" id="P46166"/>
<dbReference type="InParanoid" id="P46166"/>
<dbReference type="Proteomes" id="UP000009136">
    <property type="component" value="Unplaced"/>
</dbReference>
<dbReference type="GO" id="GO:0005615">
    <property type="term" value="C:extracellular space"/>
    <property type="evidence" value="ECO:0000318"/>
    <property type="project" value="GO_Central"/>
</dbReference>
<dbReference type="GO" id="GO:0031731">
    <property type="term" value="F:CCR6 chemokine receptor binding"/>
    <property type="evidence" value="ECO:0000318"/>
    <property type="project" value="GO_Central"/>
</dbReference>
<dbReference type="GO" id="GO:0042056">
    <property type="term" value="F:chemoattractant activity"/>
    <property type="evidence" value="ECO:0000318"/>
    <property type="project" value="GO_Central"/>
</dbReference>
<dbReference type="GO" id="GO:0060326">
    <property type="term" value="P:cell chemotaxis"/>
    <property type="evidence" value="ECO:0000318"/>
    <property type="project" value="GO_Central"/>
</dbReference>
<dbReference type="GO" id="GO:0042742">
    <property type="term" value="P:defense response to bacterium"/>
    <property type="evidence" value="ECO:0000318"/>
    <property type="project" value="GO_Central"/>
</dbReference>
<dbReference type="FunFam" id="3.10.360.10:FF:000001">
    <property type="entry name" value="Beta-defensin 1"/>
    <property type="match status" value="1"/>
</dbReference>
<dbReference type="Gene3D" id="3.10.360.10">
    <property type="entry name" value="Antimicrobial Peptide, Beta-defensin 2, Chain A"/>
    <property type="match status" value="1"/>
</dbReference>
<dbReference type="InterPro" id="IPR006080">
    <property type="entry name" value="Beta/alpha-defensin_C"/>
</dbReference>
<dbReference type="InterPro" id="IPR001855">
    <property type="entry name" value="Defensin_beta-like"/>
</dbReference>
<dbReference type="Pfam" id="PF00711">
    <property type="entry name" value="Defensin_beta"/>
    <property type="match status" value="1"/>
</dbReference>
<dbReference type="SMART" id="SM00048">
    <property type="entry name" value="DEFSN"/>
    <property type="match status" value="1"/>
</dbReference>
<dbReference type="SUPFAM" id="SSF57392">
    <property type="entry name" value="Defensin-like"/>
    <property type="match status" value="1"/>
</dbReference>
<protein>
    <recommendedName>
        <fullName>Beta-defensin 8</fullName>
    </recommendedName>
    <alternativeName>
        <fullName>BNBD-8</fullName>
    </alternativeName>
    <alternativeName>
        <fullName>BNDB-8</fullName>
    </alternativeName>
</protein>
<keyword id="KW-0044">Antibiotic</keyword>
<keyword id="KW-0929">Antimicrobial</keyword>
<keyword id="KW-0211">Defensin</keyword>
<keyword id="KW-0903">Direct protein sequencing</keyword>
<keyword id="KW-1015">Disulfide bond</keyword>
<keyword id="KW-1185">Reference proteome</keyword>
<keyword id="KW-0964">Secreted</keyword>
<name>DEFB8_BOVIN</name>